<proteinExistence type="inferred from homology"/>
<protein>
    <recommendedName>
        <fullName evidence="1">Peptidyl-tRNA hydrolase</fullName>
        <shortName evidence="1">Pth</shortName>
        <ecNumber evidence="1">3.1.1.29</ecNumber>
    </recommendedName>
</protein>
<gene>
    <name evidence="1" type="primary">pth</name>
    <name type="ordered locus">RBE_0861</name>
</gene>
<sequence length="185" mass="20840">MMLIIGLGNPGKEYEHTRHNIGFIALENIAKQYETSFSVKKKFHCEIAESTNNGQKLIFVKPTTYMNLSGKSVIAVKTYYNIPLEKIFVIHDDIDLELGKIKFKTGGGNGGHNGLKSIDGIIGNNYHRIRIGVGRPQNSQDVADYVLNNFSKTEYVIAEQAIDKITDNFNLILENKLEEFKSKMV</sequence>
<dbReference type="EC" id="3.1.1.29" evidence="1"/>
<dbReference type="EMBL" id="CP000087">
    <property type="protein sequence ID" value="ABE04942.1"/>
    <property type="molecule type" value="Genomic_DNA"/>
</dbReference>
<dbReference type="RefSeq" id="WP_011477527.1">
    <property type="nucleotide sequence ID" value="NC_007940.1"/>
</dbReference>
<dbReference type="SMR" id="Q1RI72"/>
<dbReference type="KEGG" id="rbe:RBE_0861"/>
<dbReference type="eggNOG" id="COG0193">
    <property type="taxonomic scope" value="Bacteria"/>
</dbReference>
<dbReference type="HOGENOM" id="CLU_062456_2_2_5"/>
<dbReference type="OrthoDB" id="9800507at2"/>
<dbReference type="Proteomes" id="UP000001951">
    <property type="component" value="Chromosome"/>
</dbReference>
<dbReference type="GO" id="GO:0005737">
    <property type="term" value="C:cytoplasm"/>
    <property type="evidence" value="ECO:0007669"/>
    <property type="project" value="UniProtKB-SubCell"/>
</dbReference>
<dbReference type="GO" id="GO:0004045">
    <property type="term" value="F:peptidyl-tRNA hydrolase activity"/>
    <property type="evidence" value="ECO:0007669"/>
    <property type="project" value="UniProtKB-UniRule"/>
</dbReference>
<dbReference type="GO" id="GO:0000049">
    <property type="term" value="F:tRNA binding"/>
    <property type="evidence" value="ECO:0007669"/>
    <property type="project" value="UniProtKB-UniRule"/>
</dbReference>
<dbReference type="GO" id="GO:0006515">
    <property type="term" value="P:protein quality control for misfolded or incompletely synthesized proteins"/>
    <property type="evidence" value="ECO:0007669"/>
    <property type="project" value="UniProtKB-UniRule"/>
</dbReference>
<dbReference type="GO" id="GO:0072344">
    <property type="term" value="P:rescue of stalled ribosome"/>
    <property type="evidence" value="ECO:0007669"/>
    <property type="project" value="UniProtKB-UniRule"/>
</dbReference>
<dbReference type="CDD" id="cd00462">
    <property type="entry name" value="PTH"/>
    <property type="match status" value="1"/>
</dbReference>
<dbReference type="FunFam" id="3.40.50.1470:FF:000001">
    <property type="entry name" value="Peptidyl-tRNA hydrolase"/>
    <property type="match status" value="1"/>
</dbReference>
<dbReference type="Gene3D" id="3.40.50.1470">
    <property type="entry name" value="Peptidyl-tRNA hydrolase"/>
    <property type="match status" value="1"/>
</dbReference>
<dbReference type="HAMAP" id="MF_00083">
    <property type="entry name" value="Pept_tRNA_hydro_bact"/>
    <property type="match status" value="1"/>
</dbReference>
<dbReference type="InterPro" id="IPR001328">
    <property type="entry name" value="Pept_tRNA_hydro"/>
</dbReference>
<dbReference type="InterPro" id="IPR018171">
    <property type="entry name" value="Pept_tRNA_hydro_CS"/>
</dbReference>
<dbReference type="InterPro" id="IPR036416">
    <property type="entry name" value="Pept_tRNA_hydro_sf"/>
</dbReference>
<dbReference type="NCBIfam" id="TIGR00447">
    <property type="entry name" value="pth"/>
    <property type="match status" value="1"/>
</dbReference>
<dbReference type="PANTHER" id="PTHR17224">
    <property type="entry name" value="PEPTIDYL-TRNA HYDROLASE"/>
    <property type="match status" value="1"/>
</dbReference>
<dbReference type="PANTHER" id="PTHR17224:SF1">
    <property type="entry name" value="PEPTIDYL-TRNA HYDROLASE"/>
    <property type="match status" value="1"/>
</dbReference>
<dbReference type="Pfam" id="PF01195">
    <property type="entry name" value="Pept_tRNA_hydro"/>
    <property type="match status" value="1"/>
</dbReference>
<dbReference type="SUPFAM" id="SSF53178">
    <property type="entry name" value="Peptidyl-tRNA hydrolase-like"/>
    <property type="match status" value="1"/>
</dbReference>
<dbReference type="PROSITE" id="PS01195">
    <property type="entry name" value="PEPT_TRNA_HYDROL_1"/>
    <property type="match status" value="1"/>
</dbReference>
<dbReference type="PROSITE" id="PS01196">
    <property type="entry name" value="PEPT_TRNA_HYDROL_2"/>
    <property type="match status" value="1"/>
</dbReference>
<comment type="function">
    <text evidence="1">Hydrolyzes ribosome-free peptidyl-tRNAs (with 1 or more amino acids incorporated), which drop off the ribosome during protein synthesis, or as a result of ribosome stalling.</text>
</comment>
<comment type="function">
    <text evidence="1">Catalyzes the release of premature peptidyl moieties from peptidyl-tRNA molecules trapped in stalled 50S ribosomal subunits, and thus maintains levels of free tRNAs and 50S ribosomes.</text>
</comment>
<comment type="catalytic activity">
    <reaction evidence="1">
        <text>an N-acyl-L-alpha-aminoacyl-tRNA + H2O = an N-acyl-L-amino acid + a tRNA + H(+)</text>
        <dbReference type="Rhea" id="RHEA:54448"/>
        <dbReference type="Rhea" id="RHEA-COMP:10123"/>
        <dbReference type="Rhea" id="RHEA-COMP:13883"/>
        <dbReference type="ChEBI" id="CHEBI:15377"/>
        <dbReference type="ChEBI" id="CHEBI:15378"/>
        <dbReference type="ChEBI" id="CHEBI:59874"/>
        <dbReference type="ChEBI" id="CHEBI:78442"/>
        <dbReference type="ChEBI" id="CHEBI:138191"/>
        <dbReference type="EC" id="3.1.1.29"/>
    </reaction>
</comment>
<comment type="subunit">
    <text evidence="1">Monomer.</text>
</comment>
<comment type="subcellular location">
    <subcellularLocation>
        <location evidence="1">Cytoplasm</location>
    </subcellularLocation>
</comment>
<comment type="similarity">
    <text evidence="1">Belongs to the PTH family.</text>
</comment>
<name>PTH_RICBR</name>
<reference key="1">
    <citation type="journal article" date="2006" name="PLoS Genet.">
        <title>Genome sequence of Rickettsia bellii illuminates the role of amoebae in gene exchanges between intracellular pathogens.</title>
        <authorList>
            <person name="Ogata H."/>
            <person name="La Scola B."/>
            <person name="Audic S."/>
            <person name="Renesto P."/>
            <person name="Blanc G."/>
            <person name="Robert C."/>
            <person name="Fournier P.-E."/>
            <person name="Claverie J.-M."/>
            <person name="Raoult D."/>
        </authorList>
    </citation>
    <scope>NUCLEOTIDE SEQUENCE [LARGE SCALE GENOMIC DNA]</scope>
    <source>
        <strain>RML369-C</strain>
    </source>
</reference>
<accession>Q1RI72</accession>
<organism>
    <name type="scientific">Rickettsia bellii (strain RML369-C)</name>
    <dbReference type="NCBI Taxonomy" id="336407"/>
    <lineage>
        <taxon>Bacteria</taxon>
        <taxon>Pseudomonadati</taxon>
        <taxon>Pseudomonadota</taxon>
        <taxon>Alphaproteobacteria</taxon>
        <taxon>Rickettsiales</taxon>
        <taxon>Rickettsiaceae</taxon>
        <taxon>Rickettsieae</taxon>
        <taxon>Rickettsia</taxon>
        <taxon>belli group</taxon>
    </lineage>
</organism>
<feature type="chain" id="PRO_0000264096" description="Peptidyl-tRNA hydrolase">
    <location>
        <begin position="1"/>
        <end position="185"/>
    </location>
</feature>
<feature type="active site" description="Proton acceptor" evidence="1">
    <location>
        <position position="19"/>
    </location>
</feature>
<feature type="binding site" evidence="1">
    <location>
        <position position="14"/>
    </location>
    <ligand>
        <name>tRNA</name>
        <dbReference type="ChEBI" id="CHEBI:17843"/>
    </ligand>
</feature>
<feature type="binding site" evidence="1">
    <location>
        <position position="65"/>
    </location>
    <ligand>
        <name>tRNA</name>
        <dbReference type="ChEBI" id="CHEBI:17843"/>
    </ligand>
</feature>
<feature type="binding site" evidence="1">
    <location>
        <position position="67"/>
    </location>
    <ligand>
        <name>tRNA</name>
        <dbReference type="ChEBI" id="CHEBI:17843"/>
    </ligand>
</feature>
<feature type="binding site" evidence="1">
    <location>
        <position position="113"/>
    </location>
    <ligand>
        <name>tRNA</name>
        <dbReference type="ChEBI" id="CHEBI:17843"/>
    </ligand>
</feature>
<feature type="site" description="Discriminates between blocked and unblocked aminoacyl-tRNA" evidence="1">
    <location>
        <position position="9"/>
    </location>
</feature>
<feature type="site" description="Stabilizes the basic form of H active site to accept a proton" evidence="1">
    <location>
        <position position="92"/>
    </location>
</feature>
<keyword id="KW-0963">Cytoplasm</keyword>
<keyword id="KW-0378">Hydrolase</keyword>
<keyword id="KW-0694">RNA-binding</keyword>
<keyword id="KW-0820">tRNA-binding</keyword>
<evidence type="ECO:0000255" key="1">
    <source>
        <dbReference type="HAMAP-Rule" id="MF_00083"/>
    </source>
</evidence>